<reference key="1">
    <citation type="submission" date="2009-05" db="EMBL/GenBank/DDBJ databases">
        <title>Complete sequence of Tolumonas auensis DSM 9187.</title>
        <authorList>
            <consortium name="US DOE Joint Genome Institute"/>
            <person name="Lucas S."/>
            <person name="Copeland A."/>
            <person name="Lapidus A."/>
            <person name="Glavina del Rio T."/>
            <person name="Tice H."/>
            <person name="Bruce D."/>
            <person name="Goodwin L."/>
            <person name="Pitluck S."/>
            <person name="Chertkov O."/>
            <person name="Brettin T."/>
            <person name="Detter J.C."/>
            <person name="Han C."/>
            <person name="Larimer F."/>
            <person name="Land M."/>
            <person name="Hauser L."/>
            <person name="Kyrpides N."/>
            <person name="Mikhailova N."/>
            <person name="Spring S."/>
            <person name="Beller H."/>
        </authorList>
    </citation>
    <scope>NUCLEOTIDE SEQUENCE [LARGE SCALE GENOMIC DNA]</scope>
    <source>
        <strain>DSM 9187 / NBRC 110442 / TA 4</strain>
    </source>
</reference>
<dbReference type="EC" id="2.1.1.242" evidence="1"/>
<dbReference type="EMBL" id="CP001616">
    <property type="protein sequence ID" value="ACQ94589.1"/>
    <property type="molecule type" value="Genomic_DNA"/>
</dbReference>
<dbReference type="RefSeq" id="WP_015880038.1">
    <property type="nucleotide sequence ID" value="NC_012691.1"/>
</dbReference>
<dbReference type="SMR" id="C4LD58"/>
<dbReference type="STRING" id="595494.Tola_3000"/>
<dbReference type="KEGG" id="tau:Tola_3000"/>
<dbReference type="eggNOG" id="COG0742">
    <property type="taxonomic scope" value="Bacteria"/>
</dbReference>
<dbReference type="HOGENOM" id="CLU_076324_0_1_6"/>
<dbReference type="Proteomes" id="UP000009073">
    <property type="component" value="Chromosome"/>
</dbReference>
<dbReference type="GO" id="GO:0005737">
    <property type="term" value="C:cytoplasm"/>
    <property type="evidence" value="ECO:0007669"/>
    <property type="project" value="UniProtKB-SubCell"/>
</dbReference>
<dbReference type="GO" id="GO:0008990">
    <property type="term" value="F:rRNA (guanine-N2-)-methyltransferase activity"/>
    <property type="evidence" value="ECO:0007669"/>
    <property type="project" value="UniProtKB-UniRule"/>
</dbReference>
<dbReference type="CDD" id="cd02440">
    <property type="entry name" value="AdoMet_MTases"/>
    <property type="match status" value="1"/>
</dbReference>
<dbReference type="Gene3D" id="3.40.50.150">
    <property type="entry name" value="Vaccinia Virus protein VP39"/>
    <property type="match status" value="1"/>
</dbReference>
<dbReference type="Gene3D" id="3.40.1630.10">
    <property type="entry name" value="YhiQ-like domain"/>
    <property type="match status" value="1"/>
</dbReference>
<dbReference type="HAMAP" id="MF_01523">
    <property type="entry name" value="16SrRNA_methyltr_J"/>
    <property type="match status" value="1"/>
</dbReference>
<dbReference type="InterPro" id="IPR007536">
    <property type="entry name" value="16SrRNA_methylTrfase_J"/>
</dbReference>
<dbReference type="InterPro" id="IPR029063">
    <property type="entry name" value="SAM-dependent_MTases_sf"/>
</dbReference>
<dbReference type="PANTHER" id="PTHR36112">
    <property type="entry name" value="RIBOSOMAL RNA SMALL SUBUNIT METHYLTRANSFERASE J"/>
    <property type="match status" value="1"/>
</dbReference>
<dbReference type="PANTHER" id="PTHR36112:SF1">
    <property type="entry name" value="RIBOSOMAL RNA SMALL SUBUNIT METHYLTRANSFERASE J"/>
    <property type="match status" value="1"/>
</dbReference>
<dbReference type="Pfam" id="PF04445">
    <property type="entry name" value="SAM_MT"/>
    <property type="match status" value="1"/>
</dbReference>
<dbReference type="SUPFAM" id="SSF53335">
    <property type="entry name" value="S-adenosyl-L-methionine-dependent methyltransferases"/>
    <property type="match status" value="1"/>
</dbReference>
<accession>C4LD58</accession>
<organism>
    <name type="scientific">Tolumonas auensis (strain DSM 9187 / NBRC 110442 / TA 4)</name>
    <dbReference type="NCBI Taxonomy" id="595494"/>
    <lineage>
        <taxon>Bacteria</taxon>
        <taxon>Pseudomonadati</taxon>
        <taxon>Pseudomonadota</taxon>
        <taxon>Gammaproteobacteria</taxon>
        <taxon>Aeromonadales</taxon>
        <taxon>Aeromonadaceae</taxon>
        <taxon>Tolumonas</taxon>
    </lineage>
</organism>
<gene>
    <name evidence="1" type="primary">rsmJ</name>
    <name type="ordered locus">Tola_3000</name>
</gene>
<evidence type="ECO:0000255" key="1">
    <source>
        <dbReference type="HAMAP-Rule" id="MF_01523"/>
    </source>
</evidence>
<protein>
    <recommendedName>
        <fullName evidence="1">Ribosomal RNA small subunit methyltransferase J</fullName>
        <ecNumber evidence="1">2.1.1.242</ecNumber>
    </recommendedName>
    <alternativeName>
        <fullName evidence="1">16S rRNA m2G1516 methyltransferase</fullName>
    </alternativeName>
    <alternativeName>
        <fullName evidence="1">rRNA (guanine-N(2)-)-methyltransferase</fullName>
    </alternativeName>
</protein>
<feature type="chain" id="PRO_0000383391" description="Ribosomal RNA small subunit methyltransferase J">
    <location>
        <begin position="1"/>
        <end position="249"/>
    </location>
</feature>
<feature type="binding site" evidence="1">
    <location>
        <begin position="101"/>
        <end position="102"/>
    </location>
    <ligand>
        <name>S-adenosyl-L-methionine</name>
        <dbReference type="ChEBI" id="CHEBI:59789"/>
    </ligand>
</feature>
<feature type="binding site" evidence="1">
    <location>
        <begin position="117"/>
        <end position="118"/>
    </location>
    <ligand>
        <name>S-adenosyl-L-methionine</name>
        <dbReference type="ChEBI" id="CHEBI:59789"/>
    </ligand>
</feature>
<feature type="binding site" evidence="1">
    <location>
        <position position="171"/>
    </location>
    <ligand>
        <name>S-adenosyl-L-methionine</name>
        <dbReference type="ChEBI" id="CHEBI:59789"/>
    </ligand>
</feature>
<sequence length="249" mass="27179">MYPIQVIAEDPERTAQAAELATRLQQQMAESPFALVWGEQHLELRKLDEPKLGPVFVDFVEGAVAHRRKFGGGRGQSIAKAVGLKAGANPTVVDATAGLGRDAFVLASLGCQVTMLERHPVVAALLADGLQRAQQDSEIGGWMRERMSLRSGPALENLQQLGFTPDVVYLDPMFPHRQKSALVKKEMRVFQSLVGADLDADALLPAALAVAGKRVVVKRPDYAGYLNEMKPGMSIETKSNRFDVYVISR</sequence>
<keyword id="KW-0963">Cytoplasm</keyword>
<keyword id="KW-0489">Methyltransferase</keyword>
<keyword id="KW-1185">Reference proteome</keyword>
<keyword id="KW-0698">rRNA processing</keyword>
<keyword id="KW-0949">S-adenosyl-L-methionine</keyword>
<keyword id="KW-0808">Transferase</keyword>
<comment type="function">
    <text evidence="1">Specifically methylates the guanosine in position 1516 of 16S rRNA.</text>
</comment>
<comment type="catalytic activity">
    <reaction evidence="1">
        <text>guanosine(1516) in 16S rRNA + S-adenosyl-L-methionine = N(2)-methylguanosine(1516) in 16S rRNA + S-adenosyl-L-homocysteine + H(+)</text>
        <dbReference type="Rhea" id="RHEA:43220"/>
        <dbReference type="Rhea" id="RHEA-COMP:10412"/>
        <dbReference type="Rhea" id="RHEA-COMP:10413"/>
        <dbReference type="ChEBI" id="CHEBI:15378"/>
        <dbReference type="ChEBI" id="CHEBI:57856"/>
        <dbReference type="ChEBI" id="CHEBI:59789"/>
        <dbReference type="ChEBI" id="CHEBI:74269"/>
        <dbReference type="ChEBI" id="CHEBI:74481"/>
        <dbReference type="EC" id="2.1.1.242"/>
    </reaction>
</comment>
<comment type="subcellular location">
    <subcellularLocation>
        <location evidence="1">Cytoplasm</location>
    </subcellularLocation>
</comment>
<comment type="similarity">
    <text evidence="1">Belongs to the methyltransferase superfamily. RsmJ family.</text>
</comment>
<proteinExistence type="inferred from homology"/>
<name>RSMJ_TOLAT</name>